<proteinExistence type="inferred from homology"/>
<protein>
    <recommendedName>
        <fullName evidence="1">3-keto-L-gulonate-6-phosphate decarboxylase UlaD</fullName>
        <ecNumber evidence="1">4.1.1.85</ecNumber>
    </recommendedName>
    <alternativeName>
        <fullName evidence="1">3-dehydro-L-gulonate-6-phosphate decarboxylase</fullName>
    </alternativeName>
    <alternativeName>
        <fullName evidence="1">KGPDC</fullName>
    </alternativeName>
    <alternativeName>
        <fullName evidence="1">L-ascorbate utilization protein D</fullName>
    </alternativeName>
</protein>
<name>ULAD_ECOHS</name>
<feature type="chain" id="PRO_1000067319" description="3-keto-L-gulonate-6-phosphate decarboxylase UlaD">
    <location>
        <begin position="1"/>
        <end position="216"/>
    </location>
</feature>
<feature type="binding site" evidence="1">
    <location>
        <position position="11"/>
    </location>
    <ligand>
        <name>substrate</name>
    </ligand>
</feature>
<feature type="binding site" evidence="1">
    <location>
        <position position="33"/>
    </location>
    <ligand>
        <name>Mg(2+)</name>
        <dbReference type="ChEBI" id="CHEBI:18420"/>
    </ligand>
</feature>
<feature type="binding site" evidence="1">
    <location>
        <position position="62"/>
    </location>
    <ligand>
        <name>Mg(2+)</name>
        <dbReference type="ChEBI" id="CHEBI:18420"/>
    </ligand>
</feature>
<feature type="binding site" evidence="1">
    <location>
        <position position="192"/>
    </location>
    <ligand>
        <name>substrate</name>
    </ligand>
</feature>
<feature type="site" description="Transition state stabilizer" evidence="1">
    <location>
        <position position="64"/>
    </location>
</feature>
<feature type="site" description="Transition state stabilizer" evidence="1">
    <location>
        <position position="67"/>
    </location>
</feature>
<dbReference type="EC" id="4.1.1.85" evidence="1"/>
<dbReference type="EMBL" id="CP000802">
    <property type="protein sequence ID" value="ABV08596.1"/>
    <property type="molecule type" value="Genomic_DNA"/>
</dbReference>
<dbReference type="RefSeq" id="WP_000056760.1">
    <property type="nucleotide sequence ID" value="NC_009800.1"/>
</dbReference>
<dbReference type="SMR" id="A8A7U2"/>
<dbReference type="GeneID" id="75202430"/>
<dbReference type="KEGG" id="ecx:EcHS_A4440"/>
<dbReference type="HOGENOM" id="CLU_081825_0_0_6"/>
<dbReference type="UniPathway" id="UPA00263">
    <property type="reaction ID" value="UER00378"/>
</dbReference>
<dbReference type="GO" id="GO:0033982">
    <property type="term" value="F:3-dehydro-L-gulonate-6-phosphate decarboxylase activity"/>
    <property type="evidence" value="ECO:0007669"/>
    <property type="project" value="UniProtKB-EC"/>
</dbReference>
<dbReference type="GO" id="GO:0000287">
    <property type="term" value="F:magnesium ion binding"/>
    <property type="evidence" value="ECO:0007669"/>
    <property type="project" value="UniProtKB-UniRule"/>
</dbReference>
<dbReference type="GO" id="GO:0004590">
    <property type="term" value="F:orotidine-5'-phosphate decarboxylase activity"/>
    <property type="evidence" value="ECO:0007669"/>
    <property type="project" value="InterPro"/>
</dbReference>
<dbReference type="GO" id="GO:0006207">
    <property type="term" value="P:'de novo' pyrimidine nucleobase biosynthetic process"/>
    <property type="evidence" value="ECO:0007669"/>
    <property type="project" value="InterPro"/>
</dbReference>
<dbReference type="GO" id="GO:0019854">
    <property type="term" value="P:L-ascorbic acid catabolic process"/>
    <property type="evidence" value="ECO:0007669"/>
    <property type="project" value="UniProtKB-UniRule"/>
</dbReference>
<dbReference type="CDD" id="cd04726">
    <property type="entry name" value="KGPDC_HPS"/>
    <property type="match status" value="1"/>
</dbReference>
<dbReference type="FunFam" id="3.20.20.70:FF:000022">
    <property type="entry name" value="3-keto-L-gulonate-6-phosphate decarboxylase UlaD"/>
    <property type="match status" value="1"/>
</dbReference>
<dbReference type="Gene3D" id="3.20.20.70">
    <property type="entry name" value="Aldolase class I"/>
    <property type="match status" value="1"/>
</dbReference>
<dbReference type="HAMAP" id="MF_01267">
    <property type="entry name" value="UlaD"/>
    <property type="match status" value="1"/>
</dbReference>
<dbReference type="InterPro" id="IPR023942">
    <property type="entry name" value="3-keto-L-gulonate6Pdecase_UlaD"/>
</dbReference>
<dbReference type="InterPro" id="IPR013785">
    <property type="entry name" value="Aldolase_TIM"/>
</dbReference>
<dbReference type="InterPro" id="IPR041710">
    <property type="entry name" value="HPS/KGPDC"/>
</dbReference>
<dbReference type="InterPro" id="IPR001754">
    <property type="entry name" value="OMPdeCOase_dom"/>
</dbReference>
<dbReference type="InterPro" id="IPR011060">
    <property type="entry name" value="RibuloseP-bd_barrel"/>
</dbReference>
<dbReference type="NCBIfam" id="NF009832">
    <property type="entry name" value="PRK13306.1"/>
    <property type="match status" value="1"/>
</dbReference>
<dbReference type="PANTHER" id="PTHR35039">
    <property type="entry name" value="3-KETO-L-GULONATE-6-PHOSPHATE DECARBOXYLASE SGBH-RELATED"/>
    <property type="match status" value="1"/>
</dbReference>
<dbReference type="PANTHER" id="PTHR35039:SF3">
    <property type="entry name" value="3-KETO-L-GULONATE-6-PHOSPHATE DECARBOXYLASE SGBH-RELATED"/>
    <property type="match status" value="1"/>
</dbReference>
<dbReference type="Pfam" id="PF00215">
    <property type="entry name" value="OMPdecase"/>
    <property type="match status" value="1"/>
</dbReference>
<dbReference type="SMART" id="SM00934">
    <property type="entry name" value="OMPdecase"/>
    <property type="match status" value="1"/>
</dbReference>
<dbReference type="SUPFAM" id="SSF51366">
    <property type="entry name" value="Ribulose-phoshate binding barrel"/>
    <property type="match status" value="1"/>
</dbReference>
<reference key="1">
    <citation type="journal article" date="2008" name="J. Bacteriol.">
        <title>The pangenome structure of Escherichia coli: comparative genomic analysis of E. coli commensal and pathogenic isolates.</title>
        <authorList>
            <person name="Rasko D.A."/>
            <person name="Rosovitz M.J."/>
            <person name="Myers G.S.A."/>
            <person name="Mongodin E.F."/>
            <person name="Fricke W.F."/>
            <person name="Gajer P."/>
            <person name="Crabtree J."/>
            <person name="Sebaihia M."/>
            <person name="Thomson N.R."/>
            <person name="Chaudhuri R."/>
            <person name="Henderson I.R."/>
            <person name="Sperandio V."/>
            <person name="Ravel J."/>
        </authorList>
    </citation>
    <scope>NUCLEOTIDE SEQUENCE [LARGE SCALE GENOMIC DNA]</scope>
    <source>
        <strain>HS</strain>
    </source>
</reference>
<organism>
    <name type="scientific">Escherichia coli O9:H4 (strain HS)</name>
    <dbReference type="NCBI Taxonomy" id="331112"/>
    <lineage>
        <taxon>Bacteria</taxon>
        <taxon>Pseudomonadati</taxon>
        <taxon>Pseudomonadota</taxon>
        <taxon>Gammaproteobacteria</taxon>
        <taxon>Enterobacterales</taxon>
        <taxon>Enterobacteriaceae</taxon>
        <taxon>Escherichia</taxon>
    </lineage>
</organism>
<sequence length="216" mass="23649">MSLPMLQVALDNQTMDSAYETTRLIAEEVDIIEVGTILCVGEGVRAVRDLKALYPHKIVLADAKIADAGKILSRMCFEANADWVTVICCADINTAKGALDVAKEFNGDVQIELTGYWTWEQAQQWRDAGIQQVVYHRSRDAQAAGVAWGEADITAIKRLSDMGFKVTVTGGLALEDLPLFKGIPIHVFIAGRSIRDAASPVEAARQFKRSIAELWG</sequence>
<evidence type="ECO:0000255" key="1">
    <source>
        <dbReference type="HAMAP-Rule" id="MF_01267"/>
    </source>
</evidence>
<comment type="function">
    <text evidence="1">Catalyzes the decarboxylation of 3-keto-L-gulonate-6-P into L-xylulose-5-P. Is involved in the anaerobic L-ascorbate utilization.</text>
</comment>
<comment type="catalytic activity">
    <reaction evidence="1">
        <text>3-dehydro-L-gulonate 6-phosphate + H(+) = L-xylulose 5-phosphate + CO2</text>
        <dbReference type="Rhea" id="RHEA:14353"/>
        <dbReference type="ChEBI" id="CHEBI:15378"/>
        <dbReference type="ChEBI" id="CHEBI:16526"/>
        <dbReference type="ChEBI" id="CHEBI:57829"/>
        <dbReference type="ChEBI" id="CHEBI:58774"/>
        <dbReference type="EC" id="4.1.1.85"/>
    </reaction>
</comment>
<comment type="cofactor">
    <cofactor evidence="1">
        <name>Mg(2+)</name>
        <dbReference type="ChEBI" id="CHEBI:18420"/>
    </cofactor>
    <text evidence="1">Binds 1 Mg(2+) ion per subunit.</text>
</comment>
<comment type="pathway">
    <text evidence="1">Cofactor degradation; L-ascorbate degradation; D-xylulose 5-phosphate from L-ascorbate: step 2/4.</text>
</comment>
<comment type="subunit">
    <text evidence="1">Homodimer.</text>
</comment>
<comment type="induction">
    <text evidence="1">Induced by L-ascorbate. Repressed by UlaR.</text>
</comment>
<comment type="similarity">
    <text evidence="1">Belongs to the HPS/KGPDC family. KGPDC subfamily.</text>
</comment>
<gene>
    <name evidence="1" type="primary">ulaD</name>
    <name type="ordered locus">EcHS_A4440</name>
</gene>
<accession>A8A7U2</accession>
<keyword id="KW-0119">Carbohydrate metabolism</keyword>
<keyword id="KW-0210">Decarboxylase</keyword>
<keyword id="KW-0456">Lyase</keyword>
<keyword id="KW-0460">Magnesium</keyword>
<keyword id="KW-0479">Metal-binding</keyword>